<gene>
    <name type="primary">SQS1</name>
    <name type="ordered locus">CAALFM_CR03230WA</name>
    <name type="ORF">CaO19.2400</name>
    <name type="ORF">CaO19.9936</name>
</gene>
<organism>
    <name type="scientific">Candida albicans (strain SC5314 / ATCC MYA-2876)</name>
    <name type="common">Yeast</name>
    <dbReference type="NCBI Taxonomy" id="237561"/>
    <lineage>
        <taxon>Eukaryota</taxon>
        <taxon>Fungi</taxon>
        <taxon>Dikarya</taxon>
        <taxon>Ascomycota</taxon>
        <taxon>Saccharomycotina</taxon>
        <taxon>Pichiomycetes</taxon>
        <taxon>Debaryomycetaceae</taxon>
        <taxon>Candida/Lodderomyces clade</taxon>
        <taxon>Candida</taxon>
    </lineage>
</organism>
<feature type="chain" id="PRO_0000324994" description="Protein SQS1">
    <location>
        <begin position="1"/>
        <end position="705"/>
    </location>
</feature>
<feature type="domain" description="R3H">
    <location>
        <begin position="530"/>
        <end position="594"/>
    </location>
</feature>
<feature type="domain" description="G-patch" evidence="2">
    <location>
        <begin position="662"/>
        <end position="705"/>
    </location>
</feature>
<feature type="region of interest" description="Disordered" evidence="3">
    <location>
        <begin position="1"/>
        <end position="61"/>
    </location>
</feature>
<feature type="region of interest" description="Disordered" evidence="3">
    <location>
        <begin position="152"/>
        <end position="272"/>
    </location>
</feature>
<feature type="region of interest" description="Disordered" evidence="3">
    <location>
        <begin position="287"/>
        <end position="325"/>
    </location>
</feature>
<feature type="region of interest" description="Disordered" evidence="3">
    <location>
        <begin position="398"/>
        <end position="439"/>
    </location>
</feature>
<feature type="region of interest" description="Disordered" evidence="3">
    <location>
        <begin position="616"/>
        <end position="648"/>
    </location>
</feature>
<feature type="compositionally biased region" description="Basic residues" evidence="3">
    <location>
        <begin position="1"/>
        <end position="11"/>
    </location>
</feature>
<feature type="compositionally biased region" description="Gly residues" evidence="3">
    <location>
        <begin position="12"/>
        <end position="29"/>
    </location>
</feature>
<feature type="compositionally biased region" description="Basic residues" evidence="3">
    <location>
        <begin position="41"/>
        <end position="53"/>
    </location>
</feature>
<feature type="compositionally biased region" description="Polar residues" evidence="3">
    <location>
        <begin position="152"/>
        <end position="163"/>
    </location>
</feature>
<feature type="compositionally biased region" description="Acidic residues" evidence="3">
    <location>
        <begin position="167"/>
        <end position="193"/>
    </location>
</feature>
<feature type="compositionally biased region" description="Basic and acidic residues" evidence="3">
    <location>
        <begin position="194"/>
        <end position="203"/>
    </location>
</feature>
<feature type="compositionally biased region" description="Polar residues" evidence="3">
    <location>
        <begin position="209"/>
        <end position="222"/>
    </location>
</feature>
<feature type="compositionally biased region" description="Acidic residues" evidence="3">
    <location>
        <begin position="240"/>
        <end position="260"/>
    </location>
</feature>
<feature type="compositionally biased region" description="Polar residues" evidence="3">
    <location>
        <begin position="261"/>
        <end position="272"/>
    </location>
</feature>
<feature type="compositionally biased region" description="Acidic residues" evidence="3">
    <location>
        <begin position="416"/>
        <end position="439"/>
    </location>
</feature>
<feature type="compositionally biased region" description="Basic residues" evidence="3">
    <location>
        <begin position="624"/>
        <end position="635"/>
    </location>
</feature>
<comment type="function">
    <text evidence="1">May be involved in splicing.</text>
</comment>
<comment type="subcellular location">
    <subcellularLocation>
        <location evidence="1">Cytoplasm</location>
    </subcellularLocation>
    <subcellularLocation>
        <location evidence="1">Nucleus</location>
    </subcellularLocation>
</comment>
<comment type="similarity">
    <text evidence="4">Belongs to the SQS1 family.</text>
</comment>
<keyword id="KW-0963">Cytoplasm</keyword>
<keyword id="KW-0507">mRNA processing</keyword>
<keyword id="KW-0508">mRNA splicing</keyword>
<keyword id="KW-0539">Nucleus</keyword>
<keyword id="KW-1185">Reference proteome</keyword>
<protein>
    <recommendedName>
        <fullName>Protein SQS1</fullName>
    </recommendedName>
</protein>
<accession>Q59UG4</accession>
<accession>A0A1D8PSE6</accession>
<accession>Q59UL7</accession>
<sequence length="705" mass="80496">MPKRGNRRRRGGTGGSGGGRGGRGGSRGRGGGRRTPSGANRGRHPSRGNKNRSPRTITQYGDLMDDDNIFIPKTMSEVASNMGRRKYGGMFEEIEYTESHQEDLMSRQLRNRPVEFVKAKEVYDPNVILYKLAKLNNKDDGIDIAVQSISLDDSENESSTNKVDISSSEEIEESGDEYEDEQDDEDDWDEEELHNEITTKLEALEEAMNNVSSDTESEQSVSHIEEEDEKVESHIPEPDLSAEVDEPLQEIDESENENQMESEVGTNTNTQDIETLDIIIDLPSNKVESHMSHSLPQKFKTPSSPDDDNDDNNNNSTPESEPEYGYLEEDYEFDVSKIEVSNVRFGIENQYHIKCMELTGSIDEYIWIDENDVIEYVLDNGVKEHRLNKFLSFITKGMIDEQEPEPEPEVYISDSNSEEEEEEEDDYNSEQDDYPYDSDDNLEDLIAYSKTSTQGLIPFEDRDFSNNIPSKKRQTFDHLDFDDDGELQDSLIRQLNNYKANKKLKKHQWEQQKLEESILHHDMLIKYPVSLHIKDIKSEFDQLLKDESRQSMSFPTLDTHGHKTIKNLADCYHMSVIKSGKQGIRKYLKIVKNKATFKYYPNYERINRILRGRPIFHRIDQKPQHKKGEKSKSKSSRGDASSSRARFKEGDIVGAEAPEIGSSNLGRQMLEKLGWIQGQGLGVDGNKGINEPILAKVKTSKTGIK</sequence>
<reference key="1">
    <citation type="journal article" date="2004" name="Proc. Natl. Acad. Sci. U.S.A.">
        <title>The diploid genome sequence of Candida albicans.</title>
        <authorList>
            <person name="Jones T."/>
            <person name="Federspiel N.A."/>
            <person name="Chibana H."/>
            <person name="Dungan J."/>
            <person name="Kalman S."/>
            <person name="Magee B.B."/>
            <person name="Newport G."/>
            <person name="Thorstenson Y.R."/>
            <person name="Agabian N."/>
            <person name="Magee P.T."/>
            <person name="Davis R.W."/>
            <person name="Scherer S."/>
        </authorList>
    </citation>
    <scope>NUCLEOTIDE SEQUENCE [LARGE SCALE GENOMIC DNA]</scope>
    <source>
        <strain>SC5314 / ATCC MYA-2876</strain>
    </source>
</reference>
<reference key="2">
    <citation type="journal article" date="2007" name="Genome Biol.">
        <title>Assembly of the Candida albicans genome into sixteen supercontigs aligned on the eight chromosomes.</title>
        <authorList>
            <person name="van het Hoog M."/>
            <person name="Rast T.J."/>
            <person name="Martchenko M."/>
            <person name="Grindle S."/>
            <person name="Dignard D."/>
            <person name="Hogues H."/>
            <person name="Cuomo C."/>
            <person name="Berriman M."/>
            <person name="Scherer S."/>
            <person name="Magee B.B."/>
            <person name="Whiteway M."/>
            <person name="Chibana H."/>
            <person name="Nantel A."/>
            <person name="Magee P.T."/>
        </authorList>
    </citation>
    <scope>GENOME REANNOTATION</scope>
    <source>
        <strain>SC5314 / ATCC MYA-2876</strain>
    </source>
</reference>
<reference key="3">
    <citation type="journal article" date="2013" name="Genome Biol.">
        <title>Assembly of a phased diploid Candida albicans genome facilitates allele-specific measurements and provides a simple model for repeat and indel structure.</title>
        <authorList>
            <person name="Muzzey D."/>
            <person name="Schwartz K."/>
            <person name="Weissman J.S."/>
            <person name="Sherlock G."/>
        </authorList>
    </citation>
    <scope>NUCLEOTIDE SEQUENCE [LARGE SCALE GENOMIC DNA]</scope>
    <scope>GENOME REANNOTATION</scope>
    <source>
        <strain>SC5314 / ATCC MYA-2876</strain>
    </source>
</reference>
<proteinExistence type="inferred from homology"/>
<name>SQS1_CANAL</name>
<dbReference type="EMBL" id="CP017630">
    <property type="protein sequence ID" value="AOW31061.1"/>
    <property type="molecule type" value="Genomic_DNA"/>
</dbReference>
<dbReference type="RefSeq" id="XP_713233.1">
    <property type="nucleotide sequence ID" value="XM_708140.1"/>
</dbReference>
<dbReference type="SMR" id="Q59UG4"/>
<dbReference type="FunCoup" id="Q59UG4">
    <property type="interactions" value="283"/>
</dbReference>
<dbReference type="STRING" id="237561.Q59UG4"/>
<dbReference type="EnsemblFungi" id="CR_03230W_A-T">
    <property type="protein sequence ID" value="CR_03230W_A-T-p1"/>
    <property type="gene ID" value="CR_03230W_A"/>
</dbReference>
<dbReference type="GeneID" id="3645127"/>
<dbReference type="KEGG" id="cal:CAALFM_CR03230WA"/>
<dbReference type="CGD" id="CAL0000180348">
    <property type="gene designation" value="orf19.9937"/>
</dbReference>
<dbReference type="VEuPathDB" id="FungiDB:CR_03230W_A"/>
<dbReference type="eggNOG" id="KOG0154">
    <property type="taxonomic scope" value="Eukaryota"/>
</dbReference>
<dbReference type="HOGENOM" id="CLU_021974_1_0_1"/>
<dbReference type="InParanoid" id="Q59UG4"/>
<dbReference type="OrthoDB" id="21470at2759"/>
<dbReference type="PRO" id="PR:Q59UG4"/>
<dbReference type="Proteomes" id="UP000000559">
    <property type="component" value="Chromosome R"/>
</dbReference>
<dbReference type="GO" id="GO:0005737">
    <property type="term" value="C:cytoplasm"/>
    <property type="evidence" value="ECO:0007669"/>
    <property type="project" value="UniProtKB-SubCell"/>
</dbReference>
<dbReference type="GO" id="GO:0005634">
    <property type="term" value="C:nucleus"/>
    <property type="evidence" value="ECO:0000318"/>
    <property type="project" value="GO_Central"/>
</dbReference>
<dbReference type="GO" id="GO:0003676">
    <property type="term" value="F:nucleic acid binding"/>
    <property type="evidence" value="ECO:0007669"/>
    <property type="project" value="InterPro"/>
</dbReference>
<dbReference type="GO" id="GO:0006397">
    <property type="term" value="P:mRNA processing"/>
    <property type="evidence" value="ECO:0007669"/>
    <property type="project" value="UniProtKB-KW"/>
</dbReference>
<dbReference type="GO" id="GO:0008380">
    <property type="term" value="P:RNA splicing"/>
    <property type="evidence" value="ECO:0007669"/>
    <property type="project" value="UniProtKB-KW"/>
</dbReference>
<dbReference type="CDD" id="cd02646">
    <property type="entry name" value="R3H_G-patch"/>
    <property type="match status" value="1"/>
</dbReference>
<dbReference type="InterPro" id="IPR000467">
    <property type="entry name" value="G_patch_dom"/>
</dbReference>
<dbReference type="InterPro" id="IPR034082">
    <property type="entry name" value="R3H_G-patch"/>
</dbReference>
<dbReference type="InterPro" id="IPR051189">
    <property type="entry name" value="Splicing_assoc_domain"/>
</dbReference>
<dbReference type="PANTHER" id="PTHR14195">
    <property type="entry name" value="G PATCH DOMAIN CONTAINING PROTEIN 2"/>
    <property type="match status" value="1"/>
</dbReference>
<dbReference type="Pfam" id="PF01585">
    <property type="entry name" value="G-patch"/>
    <property type="match status" value="1"/>
</dbReference>
<dbReference type="SMART" id="SM00443">
    <property type="entry name" value="G_patch"/>
    <property type="match status" value="1"/>
</dbReference>
<dbReference type="PROSITE" id="PS50174">
    <property type="entry name" value="G_PATCH"/>
    <property type="match status" value="1"/>
</dbReference>
<evidence type="ECO:0000250" key="1"/>
<evidence type="ECO:0000255" key="2">
    <source>
        <dbReference type="PROSITE-ProRule" id="PRU00092"/>
    </source>
</evidence>
<evidence type="ECO:0000256" key="3">
    <source>
        <dbReference type="SAM" id="MobiDB-lite"/>
    </source>
</evidence>
<evidence type="ECO:0000305" key="4"/>